<keyword id="KW-0223">Dioxygenase</keyword>
<keyword id="KW-0349">Heme</keyword>
<keyword id="KW-0408">Iron</keyword>
<keyword id="KW-0479">Metal-binding</keyword>
<keyword id="KW-0560">Oxidoreductase</keyword>
<keyword id="KW-0823">Tryptophan catabolism</keyword>
<evidence type="ECO:0000255" key="1">
    <source>
        <dbReference type="HAMAP-Rule" id="MF_01972"/>
    </source>
</evidence>
<evidence type="ECO:0000256" key="2">
    <source>
        <dbReference type="SAM" id="MobiDB-lite"/>
    </source>
</evidence>
<evidence type="ECO:0000305" key="3"/>
<accession>A3N6H2</accession>
<proteinExistence type="inferred from homology"/>
<reference key="1">
    <citation type="journal article" date="2010" name="Genome Biol. Evol.">
        <title>Continuing evolution of Burkholderia mallei through genome reduction and large-scale rearrangements.</title>
        <authorList>
            <person name="Losada L."/>
            <person name="Ronning C.M."/>
            <person name="DeShazer D."/>
            <person name="Woods D."/>
            <person name="Fedorova N."/>
            <person name="Kim H.S."/>
            <person name="Shabalina S.A."/>
            <person name="Pearson T.R."/>
            <person name="Brinkac L."/>
            <person name="Tan P."/>
            <person name="Nandi T."/>
            <person name="Crabtree J."/>
            <person name="Badger J."/>
            <person name="Beckstrom-Sternberg S."/>
            <person name="Saqib M."/>
            <person name="Schutzer S.E."/>
            <person name="Keim P."/>
            <person name="Nierman W.C."/>
        </authorList>
    </citation>
    <scope>NUCLEOTIDE SEQUENCE [LARGE SCALE GENOMIC DNA]</scope>
    <source>
        <strain>668</strain>
    </source>
</reference>
<feature type="chain" id="PRO_0000360109" description="Tryptophan 2,3-dioxygenase">
    <location>
        <begin position="1"/>
        <end position="306"/>
    </location>
</feature>
<feature type="region of interest" description="Disordered" evidence="2">
    <location>
        <begin position="1"/>
        <end position="33"/>
    </location>
</feature>
<feature type="binding site" evidence="1">
    <location>
        <begin position="75"/>
        <end position="79"/>
    </location>
    <ligand>
        <name>substrate</name>
    </ligand>
</feature>
<feature type="binding site" evidence="1">
    <location>
        <position position="137"/>
    </location>
    <ligand>
        <name>substrate</name>
    </ligand>
</feature>
<feature type="binding site" evidence="1">
    <location>
        <position position="141"/>
    </location>
    <ligand>
        <name>substrate</name>
    </ligand>
</feature>
<feature type="binding site" description="axial binding residue" evidence="1">
    <location>
        <position position="264"/>
    </location>
    <ligand>
        <name>heme</name>
        <dbReference type="ChEBI" id="CHEBI:30413"/>
    </ligand>
    <ligandPart>
        <name>Fe</name>
        <dbReference type="ChEBI" id="CHEBI:18248"/>
    </ligandPart>
</feature>
<feature type="binding site" evidence="1">
    <location>
        <position position="278"/>
    </location>
    <ligand>
        <name>substrate</name>
    </ligand>
</feature>
<dbReference type="EC" id="1.13.11.11" evidence="1"/>
<dbReference type="EMBL" id="CP000570">
    <property type="protein sequence ID" value="ABN84010.1"/>
    <property type="status" value="ALT_INIT"/>
    <property type="molecule type" value="Genomic_DNA"/>
</dbReference>
<dbReference type="RefSeq" id="WP_024431476.1">
    <property type="nucleotide sequence ID" value="NC_009074.1"/>
</dbReference>
<dbReference type="SMR" id="A3N6H2"/>
<dbReference type="KEGG" id="bpd:BURPS668_0892"/>
<dbReference type="HOGENOM" id="CLU_063240_0_0_4"/>
<dbReference type="UniPathway" id="UPA00333">
    <property type="reaction ID" value="UER00453"/>
</dbReference>
<dbReference type="GO" id="GO:0020037">
    <property type="term" value="F:heme binding"/>
    <property type="evidence" value="ECO:0000250"/>
    <property type="project" value="UniProtKB"/>
</dbReference>
<dbReference type="GO" id="GO:0046872">
    <property type="term" value="F:metal ion binding"/>
    <property type="evidence" value="ECO:0007669"/>
    <property type="project" value="UniProtKB-KW"/>
</dbReference>
<dbReference type="GO" id="GO:0004833">
    <property type="term" value="F:tryptophan 2,3-dioxygenase activity"/>
    <property type="evidence" value="ECO:0000250"/>
    <property type="project" value="UniProtKB"/>
</dbReference>
<dbReference type="GO" id="GO:0019442">
    <property type="term" value="P:L-tryptophan catabolic process to acetyl-CoA"/>
    <property type="evidence" value="ECO:0007669"/>
    <property type="project" value="TreeGrafter"/>
</dbReference>
<dbReference type="GO" id="GO:0019441">
    <property type="term" value="P:L-tryptophan catabolic process to kynurenine"/>
    <property type="evidence" value="ECO:0000250"/>
    <property type="project" value="UniProtKB"/>
</dbReference>
<dbReference type="FunFam" id="1.20.58.480:FF:000001">
    <property type="entry name" value="Tryptophan 2,3-dioxygenase"/>
    <property type="match status" value="1"/>
</dbReference>
<dbReference type="Gene3D" id="1.20.58.480">
    <property type="match status" value="1"/>
</dbReference>
<dbReference type="HAMAP" id="MF_01972">
    <property type="entry name" value="T23O"/>
    <property type="match status" value="1"/>
</dbReference>
<dbReference type="InterPro" id="IPR037217">
    <property type="entry name" value="Trp/Indoleamine_2_3_dOase-like"/>
</dbReference>
<dbReference type="InterPro" id="IPR017485">
    <property type="entry name" value="Trp_2-3-dOase_bac"/>
</dbReference>
<dbReference type="InterPro" id="IPR004981">
    <property type="entry name" value="Trp_2_3_dOase"/>
</dbReference>
<dbReference type="NCBIfam" id="TIGR03036">
    <property type="entry name" value="trp_2_3_diox"/>
    <property type="match status" value="1"/>
</dbReference>
<dbReference type="PANTHER" id="PTHR10138">
    <property type="entry name" value="TRYPTOPHAN 2,3-DIOXYGENASE"/>
    <property type="match status" value="1"/>
</dbReference>
<dbReference type="PANTHER" id="PTHR10138:SF0">
    <property type="entry name" value="TRYPTOPHAN 2,3-DIOXYGENASE"/>
    <property type="match status" value="1"/>
</dbReference>
<dbReference type="Pfam" id="PF03301">
    <property type="entry name" value="Trp_dioxygenase"/>
    <property type="match status" value="1"/>
</dbReference>
<dbReference type="SUPFAM" id="SSF140959">
    <property type="entry name" value="Indolic compounds 2,3-dioxygenase-like"/>
    <property type="match status" value="1"/>
</dbReference>
<comment type="function">
    <text evidence="1">Heme-dependent dioxygenase that catalyzes the oxidative cleavage of the L-tryptophan (L-Trp) pyrrole ring and converts L-tryptophan to N-formyl-L-kynurenine. Catalyzes the oxidative cleavage of the indole moiety.</text>
</comment>
<comment type="catalytic activity">
    <reaction evidence="1">
        <text>L-tryptophan + O2 = N-formyl-L-kynurenine</text>
        <dbReference type="Rhea" id="RHEA:24536"/>
        <dbReference type="ChEBI" id="CHEBI:15379"/>
        <dbReference type="ChEBI" id="CHEBI:57912"/>
        <dbReference type="ChEBI" id="CHEBI:58629"/>
        <dbReference type="EC" id="1.13.11.11"/>
    </reaction>
</comment>
<comment type="cofactor">
    <cofactor evidence="1">
        <name>heme</name>
        <dbReference type="ChEBI" id="CHEBI:30413"/>
    </cofactor>
    <text evidence="1">Binds 1 heme group per subunit.</text>
</comment>
<comment type="pathway">
    <text evidence="1">Amino-acid degradation; L-tryptophan degradation via kynurenine pathway; L-kynurenine from L-tryptophan: step 1/2.</text>
</comment>
<comment type="subunit">
    <text evidence="1">Homotetramer.</text>
</comment>
<comment type="similarity">
    <text evidence="1">Belongs to the tryptophan 2,3-dioxygenase family.</text>
</comment>
<comment type="sequence caution" evidence="3">
    <conflict type="erroneous initiation">
        <sequence resource="EMBL-CDS" id="ABN84010"/>
    </conflict>
</comment>
<name>T23O_BURP6</name>
<organism>
    <name type="scientific">Burkholderia pseudomallei (strain 668)</name>
    <dbReference type="NCBI Taxonomy" id="320373"/>
    <lineage>
        <taxon>Bacteria</taxon>
        <taxon>Pseudomonadati</taxon>
        <taxon>Pseudomonadota</taxon>
        <taxon>Betaproteobacteria</taxon>
        <taxon>Burkholderiales</taxon>
        <taxon>Burkholderiaceae</taxon>
        <taxon>Burkholderia</taxon>
        <taxon>pseudomallei group</taxon>
    </lineage>
</organism>
<sequence>MQPPGDDAAPRCPFAGAHAPDAPHVPEAAGDDAQAGWHRAQLDFSQSMSYGDYLSLDPILDAQHPRSPDHNEMLFIIQHQTSELWMKLALYELRAALASIRDDALPPAFKMLARVSRVLEQLVQAWNVLATMTPSEYSAMRPYLGASSGFQSYQYRELEFILGNKNAQMLRPHAHRPAIHAHLEASLQAPSLYDEVIRLLARRGFPIAAERLDADWTQPTRHDRTVEAAWLAVYREPNAHWELYEMAEELVDLEDAFRQWRFRHVTTVERIIGFKQGTGGTSGAPYLRKMLDVVLFPELWHVRTTL</sequence>
<gene>
    <name evidence="1" type="primary">kynA</name>
    <name type="ordered locus">BURPS668_0892</name>
</gene>
<protein>
    <recommendedName>
        <fullName evidence="1">Tryptophan 2,3-dioxygenase</fullName>
        <shortName evidence="1">TDO</shortName>
        <ecNumber evidence="1">1.13.11.11</ecNumber>
    </recommendedName>
    <alternativeName>
        <fullName evidence="1">Tryptamin 2,3-dioxygenase</fullName>
    </alternativeName>
    <alternativeName>
        <fullName evidence="1">Tryptophan oxygenase</fullName>
        <shortName evidence="1">TO</shortName>
        <shortName evidence="1">TRPO</shortName>
    </alternativeName>
    <alternativeName>
        <fullName evidence="1">Tryptophan pyrrolase</fullName>
    </alternativeName>
    <alternativeName>
        <fullName evidence="1">Tryptophanase</fullName>
    </alternativeName>
</protein>